<organism>
    <name type="scientific">Arabidopsis thaliana</name>
    <name type="common">Mouse-ear cress</name>
    <dbReference type="NCBI Taxonomy" id="3702"/>
    <lineage>
        <taxon>Eukaryota</taxon>
        <taxon>Viridiplantae</taxon>
        <taxon>Streptophyta</taxon>
        <taxon>Embryophyta</taxon>
        <taxon>Tracheophyta</taxon>
        <taxon>Spermatophyta</taxon>
        <taxon>Magnoliopsida</taxon>
        <taxon>eudicotyledons</taxon>
        <taxon>Gunneridae</taxon>
        <taxon>Pentapetalae</taxon>
        <taxon>rosids</taxon>
        <taxon>malvids</taxon>
        <taxon>Brassicales</taxon>
        <taxon>Brassicaceae</taxon>
        <taxon>Camelineae</taxon>
        <taxon>Arabidopsis</taxon>
    </lineage>
</organism>
<protein>
    <recommendedName>
        <fullName evidence="4">Thaumatin-like protein 1</fullName>
        <shortName evidence="4">AtTLP1</shortName>
    </recommendedName>
</protein>
<reference key="1">
    <citation type="journal article" date="1999" name="Nature">
        <title>Sequence and analysis of chromosome 4 of the plant Arabidopsis thaliana.</title>
        <authorList>
            <person name="Mayer K.F.X."/>
            <person name="Schueller C."/>
            <person name="Wambutt R."/>
            <person name="Murphy G."/>
            <person name="Volckaert G."/>
            <person name="Pohl T."/>
            <person name="Duesterhoeft A."/>
            <person name="Stiekema W."/>
            <person name="Entian K.-D."/>
            <person name="Terryn N."/>
            <person name="Harris B."/>
            <person name="Ansorge W."/>
            <person name="Brandt P."/>
            <person name="Grivell L.A."/>
            <person name="Rieger M."/>
            <person name="Weichselgartner M."/>
            <person name="de Simone V."/>
            <person name="Obermaier B."/>
            <person name="Mache R."/>
            <person name="Mueller M."/>
            <person name="Kreis M."/>
            <person name="Delseny M."/>
            <person name="Puigdomenech P."/>
            <person name="Watson M."/>
            <person name="Schmidtheini T."/>
            <person name="Reichert B."/>
            <person name="Portetelle D."/>
            <person name="Perez-Alonso M."/>
            <person name="Boutry M."/>
            <person name="Bancroft I."/>
            <person name="Vos P."/>
            <person name="Hoheisel J."/>
            <person name="Zimmermann W."/>
            <person name="Wedler H."/>
            <person name="Ridley P."/>
            <person name="Langham S.-A."/>
            <person name="McCullagh B."/>
            <person name="Bilham L."/>
            <person name="Robben J."/>
            <person name="van der Schueren J."/>
            <person name="Grymonprez B."/>
            <person name="Chuang Y.-J."/>
            <person name="Vandenbussche F."/>
            <person name="Braeken M."/>
            <person name="Weltjens I."/>
            <person name="Voet M."/>
            <person name="Bastiaens I."/>
            <person name="Aert R."/>
            <person name="Defoor E."/>
            <person name="Weitzenegger T."/>
            <person name="Bothe G."/>
            <person name="Ramsperger U."/>
            <person name="Hilbert H."/>
            <person name="Braun M."/>
            <person name="Holzer E."/>
            <person name="Brandt A."/>
            <person name="Peters S."/>
            <person name="van Staveren M."/>
            <person name="Dirkse W."/>
            <person name="Mooijman P."/>
            <person name="Klein Lankhorst R."/>
            <person name="Rose M."/>
            <person name="Hauf J."/>
            <person name="Koetter P."/>
            <person name="Berneiser S."/>
            <person name="Hempel S."/>
            <person name="Feldpausch M."/>
            <person name="Lamberth S."/>
            <person name="Van den Daele H."/>
            <person name="De Keyser A."/>
            <person name="Buysshaert C."/>
            <person name="Gielen J."/>
            <person name="Villarroel R."/>
            <person name="De Clercq R."/>
            <person name="van Montagu M."/>
            <person name="Rogers J."/>
            <person name="Cronin A."/>
            <person name="Quail M.A."/>
            <person name="Bray-Allen S."/>
            <person name="Clark L."/>
            <person name="Doggett J."/>
            <person name="Hall S."/>
            <person name="Kay M."/>
            <person name="Lennard N."/>
            <person name="McLay K."/>
            <person name="Mayes R."/>
            <person name="Pettett A."/>
            <person name="Rajandream M.A."/>
            <person name="Lyne M."/>
            <person name="Benes V."/>
            <person name="Rechmann S."/>
            <person name="Borkova D."/>
            <person name="Bloecker H."/>
            <person name="Scharfe M."/>
            <person name="Grimm M."/>
            <person name="Loehnert T.-H."/>
            <person name="Dose S."/>
            <person name="de Haan M."/>
            <person name="Maarse A.C."/>
            <person name="Schaefer M."/>
            <person name="Mueller-Auer S."/>
            <person name="Gabel C."/>
            <person name="Fuchs M."/>
            <person name="Fartmann B."/>
            <person name="Granderath K."/>
            <person name="Dauner D."/>
            <person name="Herzl A."/>
            <person name="Neumann S."/>
            <person name="Argiriou A."/>
            <person name="Vitale D."/>
            <person name="Liguori R."/>
            <person name="Piravandi E."/>
            <person name="Massenet O."/>
            <person name="Quigley F."/>
            <person name="Clabauld G."/>
            <person name="Muendlein A."/>
            <person name="Felber R."/>
            <person name="Schnabl S."/>
            <person name="Hiller R."/>
            <person name="Schmidt W."/>
            <person name="Lecharny A."/>
            <person name="Aubourg S."/>
            <person name="Chefdor F."/>
            <person name="Cooke R."/>
            <person name="Berger C."/>
            <person name="Monfort A."/>
            <person name="Casacuberta E."/>
            <person name="Gibbons T."/>
            <person name="Weber N."/>
            <person name="Vandenbol M."/>
            <person name="Bargues M."/>
            <person name="Terol J."/>
            <person name="Torres A."/>
            <person name="Perez-Perez A."/>
            <person name="Purnelle B."/>
            <person name="Bent E."/>
            <person name="Johnson S."/>
            <person name="Tacon D."/>
            <person name="Jesse T."/>
            <person name="Heijnen L."/>
            <person name="Schwarz S."/>
            <person name="Scholler P."/>
            <person name="Heber S."/>
            <person name="Francs P."/>
            <person name="Bielke C."/>
            <person name="Frishman D."/>
            <person name="Haase D."/>
            <person name="Lemcke K."/>
            <person name="Mewes H.-W."/>
            <person name="Stocker S."/>
            <person name="Zaccaria P."/>
            <person name="Bevan M."/>
            <person name="Wilson R.K."/>
            <person name="de la Bastide M."/>
            <person name="Habermann K."/>
            <person name="Parnell L."/>
            <person name="Dedhia N."/>
            <person name="Gnoj L."/>
            <person name="Schutz K."/>
            <person name="Huang E."/>
            <person name="Spiegel L."/>
            <person name="Sekhon M."/>
            <person name="Murray J."/>
            <person name="Sheet P."/>
            <person name="Cordes M."/>
            <person name="Abu-Threideh J."/>
            <person name="Stoneking T."/>
            <person name="Kalicki J."/>
            <person name="Graves T."/>
            <person name="Harmon G."/>
            <person name="Edwards J."/>
            <person name="Latreille P."/>
            <person name="Courtney L."/>
            <person name="Cloud J."/>
            <person name="Abbott A."/>
            <person name="Scott K."/>
            <person name="Johnson D."/>
            <person name="Minx P."/>
            <person name="Bentley D."/>
            <person name="Fulton B."/>
            <person name="Miller N."/>
            <person name="Greco T."/>
            <person name="Kemp K."/>
            <person name="Kramer J."/>
            <person name="Fulton L."/>
            <person name="Mardis E."/>
            <person name="Dante M."/>
            <person name="Pepin K."/>
            <person name="Hillier L.W."/>
            <person name="Nelson J."/>
            <person name="Spieth J."/>
            <person name="Ryan E."/>
            <person name="Andrews S."/>
            <person name="Geisel C."/>
            <person name="Layman D."/>
            <person name="Du H."/>
            <person name="Ali J."/>
            <person name="Berghoff A."/>
            <person name="Jones K."/>
            <person name="Drone K."/>
            <person name="Cotton M."/>
            <person name="Joshu C."/>
            <person name="Antonoiu B."/>
            <person name="Zidanic M."/>
            <person name="Strong C."/>
            <person name="Sun H."/>
            <person name="Lamar B."/>
            <person name="Yordan C."/>
            <person name="Ma P."/>
            <person name="Zhong J."/>
            <person name="Preston R."/>
            <person name="Vil D."/>
            <person name="Shekher M."/>
            <person name="Matero A."/>
            <person name="Shah R."/>
            <person name="Swaby I.K."/>
            <person name="O'Shaughnessy A."/>
            <person name="Rodriguez M."/>
            <person name="Hoffman J."/>
            <person name="Till S."/>
            <person name="Granat S."/>
            <person name="Shohdy N."/>
            <person name="Hasegawa A."/>
            <person name="Hameed A."/>
            <person name="Lodhi M."/>
            <person name="Johnson A."/>
            <person name="Chen E."/>
            <person name="Marra M.A."/>
            <person name="Martienssen R."/>
            <person name="McCombie W.R."/>
        </authorList>
    </citation>
    <scope>NUCLEOTIDE SEQUENCE [LARGE SCALE GENOMIC DNA]</scope>
    <source>
        <strain>cv. Columbia</strain>
    </source>
</reference>
<reference key="2">
    <citation type="journal article" date="2017" name="Plant J.">
        <title>Araport11: a complete reannotation of the Arabidopsis thaliana reference genome.</title>
        <authorList>
            <person name="Cheng C.Y."/>
            <person name="Krishnakumar V."/>
            <person name="Chan A.P."/>
            <person name="Thibaud-Nissen F."/>
            <person name="Schobel S."/>
            <person name="Town C.D."/>
        </authorList>
    </citation>
    <scope>GENOME REANNOTATION</scope>
    <source>
        <strain>cv. Columbia</strain>
    </source>
</reference>
<reference key="3">
    <citation type="journal article" date="2003" name="Genome Res.">
        <title>Large-scale identification and analysis of genome-wide single-nucleotide polymorphisms for mapping in Arabidopsis thaliana.</title>
        <authorList>
            <person name="Schmid K.J."/>
            <person name="Soerensen T.R."/>
            <person name="Stracke R."/>
            <person name="Torjek O."/>
            <person name="Altmann T."/>
            <person name="Mitchell-Olds T."/>
            <person name="Weisshaar B."/>
        </authorList>
    </citation>
    <scope>NUCLEOTIDE SEQUENCE [LARGE SCALE MRNA] OF 1-204 (ISOFORM 1)</scope>
    <source>
        <strain>cv. Wassilewskija</strain>
    </source>
</reference>
<reference key="4">
    <citation type="journal article" date="2005" name="Plant Mol. Biol.">
        <title>Colonization of the Arabidopsis rhizosphere by fluorescent Pseudomonas spp. activates a root-specific, ethylene-responsive PR-5 gene in the vascular bundle.</title>
        <authorList>
            <person name="Leon-Kloosterziel K.M."/>
            <person name="Verhagen B.W.M."/>
            <person name="Keurentjes J.J.B."/>
            <person name="VanPelt J.A."/>
            <person name="Rep M."/>
            <person name="VanLoon L.C."/>
            <person name="Pieterse C.M.J."/>
        </authorList>
    </citation>
    <scope>FUNCTION</scope>
    <scope>DISRUPTION PHENOTYPE</scope>
    <scope>INDUCTION BY ETHYLENE; PSEUDOMONAS FLUORESCENS AND PSEUDOMONAS PUTIDA</scope>
    <scope>TISSUE SPECIFICITY</scope>
    <source>
        <strain>cv. Landsberg erecta</strain>
    </source>
</reference>
<proteinExistence type="evidence at transcript level"/>
<accession>A0A1P8B554</accession>
<accession>O22973</accession>
<accession>Q9STX6</accession>
<keyword id="KW-0025">Alternative splicing</keyword>
<keyword id="KW-1015">Disulfide bond</keyword>
<keyword id="KW-0568">Pathogenesis-related protein</keyword>
<keyword id="KW-0611">Plant defense</keyword>
<keyword id="KW-1185">Reference proteome</keyword>
<keyword id="KW-0732">Signal</keyword>
<comment type="function">
    <text evidence="3">Involved in local responses of roots to colonization by non-pathogenic plant growth-promoting rhizobacteria (PGPR) fluorescent Pseudomonas spp., but seems to not being required for the establishment of subsequent induced systemic resistance (ISR).</text>
</comment>
<comment type="alternative products">
    <event type="alternative splicing"/>
    <isoform>
        <id>A0A1P8B554-1</id>
        <name>1</name>
        <sequence type="displayed"/>
    </isoform>
    <isoform>
        <id>A0A1P8B554-2</id>
        <name>2</name>
        <sequence type="described" ref="VSP_059133"/>
    </isoform>
</comment>
<comment type="tissue specificity">
    <text evidence="3">Expressed only in roots.</text>
</comment>
<comment type="induction">
    <text evidence="3">Accumulates locally in the root vascular bundle upon P.fluorescens WCS417r and P.putida WCS358r bacteria root colonization prior to induced systemic resistance (ISR) and after ethylene treatment (e.g. ACC).</text>
</comment>
<comment type="disruption phenotype">
    <text evidence="3">Normal induced systemic resistance (ISR) mediated by P.fluorescens WCS417r toward the pathogenic bacteria P.syringae pv. tomato DC3000.</text>
</comment>
<comment type="similarity">
    <text evidence="2">Belongs to the thaumatin family.</text>
</comment>
<comment type="sequence caution" evidence="5">
    <conflict type="erroneous gene model prediction">
        <sequence resource="EMBL-CDS" id="AAB63607"/>
    </conflict>
</comment>
<dbReference type="EMBL" id="AC002343">
    <property type="protein sequence ID" value="AAB63607.1"/>
    <property type="status" value="ALT_SEQ"/>
    <property type="molecule type" value="Genomic_DNA"/>
</dbReference>
<dbReference type="EMBL" id="AL078637">
    <property type="protein sequence ID" value="CAB45053.1"/>
    <property type="molecule type" value="Genomic_DNA"/>
</dbReference>
<dbReference type="EMBL" id="AL161561">
    <property type="protein sequence ID" value="CAB79328.1"/>
    <property type="molecule type" value="Genomic_DNA"/>
</dbReference>
<dbReference type="EMBL" id="CP002687">
    <property type="protein sequence ID" value="ANM66720.1"/>
    <property type="molecule type" value="Genomic_DNA"/>
</dbReference>
<dbReference type="EMBL" id="CP002687">
    <property type="protein sequence ID" value="ANM66723.1"/>
    <property type="molecule type" value="Genomic_DNA"/>
</dbReference>
<dbReference type="EMBL" id="CF652807">
    <property type="status" value="NOT_ANNOTATED_CDS"/>
    <property type="molecule type" value="mRNA"/>
</dbReference>
<dbReference type="PIR" id="T09881">
    <property type="entry name" value="T09881"/>
</dbReference>
<dbReference type="RefSeq" id="NP_001328599.1">
    <molecule id="A0A1P8B554-2"/>
    <property type="nucleotide sequence ID" value="NM_001341652.1"/>
</dbReference>
<dbReference type="RefSeq" id="NP_194149.2">
    <molecule id="A0A1P8B554-1"/>
    <property type="nucleotide sequence ID" value="NM_118551.3"/>
</dbReference>
<dbReference type="SMR" id="A0A1P8B554"/>
<dbReference type="FunCoup" id="A0A1P8B554">
    <property type="interactions" value="2"/>
</dbReference>
<dbReference type="STRING" id="3702.A0A1P8B554"/>
<dbReference type="PaxDb" id="3702-AT4G24180.1"/>
<dbReference type="EnsemblPlants" id="AT4G24180.5">
    <molecule id="A0A1P8B554-2"/>
    <property type="protein sequence ID" value="AT4G24180.5"/>
    <property type="gene ID" value="AT4G24180"/>
</dbReference>
<dbReference type="EnsemblPlants" id="AT4G24180.6">
    <molecule id="A0A1P8B554-1"/>
    <property type="protein sequence ID" value="AT4G24180.6"/>
    <property type="gene ID" value="AT4G24180"/>
</dbReference>
<dbReference type="GeneID" id="828519"/>
<dbReference type="Gramene" id="AT4G24180.5">
    <molecule id="A0A1P8B554-2"/>
    <property type="protein sequence ID" value="AT4G24180.5"/>
    <property type="gene ID" value="AT4G24180"/>
</dbReference>
<dbReference type="Gramene" id="AT4G24180.6">
    <molecule id="A0A1P8B554-1"/>
    <property type="protein sequence ID" value="AT4G24180.6"/>
    <property type="gene ID" value="AT4G24180"/>
</dbReference>
<dbReference type="KEGG" id="ath:AT4G24180"/>
<dbReference type="Araport" id="AT4G24180"/>
<dbReference type="TAIR" id="AT4G24180">
    <property type="gene designation" value="TLP1"/>
</dbReference>
<dbReference type="eggNOG" id="ENOG502QPIR">
    <property type="taxonomic scope" value="Eukaryota"/>
</dbReference>
<dbReference type="InParanoid" id="A0A1P8B554"/>
<dbReference type="OMA" id="NSPWFPN"/>
<dbReference type="OrthoDB" id="430315at2759"/>
<dbReference type="PRO" id="PR:A0A1P8B554"/>
<dbReference type="Proteomes" id="UP000006548">
    <property type="component" value="Chromosome 4"/>
</dbReference>
<dbReference type="ExpressionAtlas" id="A0A1P8B554">
    <property type="expression patterns" value="baseline and differential"/>
</dbReference>
<dbReference type="GO" id="GO:0006952">
    <property type="term" value="P:defense response"/>
    <property type="evidence" value="ECO:0007669"/>
    <property type="project" value="UniProtKB-KW"/>
</dbReference>
<dbReference type="GO" id="GO:0009617">
    <property type="term" value="P:response to bacterium"/>
    <property type="evidence" value="ECO:0000270"/>
    <property type="project" value="UniProtKB"/>
</dbReference>
<dbReference type="GO" id="GO:0009723">
    <property type="term" value="P:response to ethylene"/>
    <property type="evidence" value="ECO:0000270"/>
    <property type="project" value="UniProtKB"/>
</dbReference>
<dbReference type="CDD" id="cd09218">
    <property type="entry name" value="TLP-PA"/>
    <property type="match status" value="1"/>
</dbReference>
<dbReference type="FunFam" id="2.60.110.10:FF:000001">
    <property type="entry name" value="THAUMATIN-LIKE PROTEIN 1"/>
    <property type="match status" value="1"/>
</dbReference>
<dbReference type="Gene3D" id="2.60.110.10">
    <property type="entry name" value="Thaumatin"/>
    <property type="match status" value="1"/>
</dbReference>
<dbReference type="InterPro" id="IPR037176">
    <property type="entry name" value="Osmotin/thaumatin-like_sf"/>
</dbReference>
<dbReference type="InterPro" id="IPR001938">
    <property type="entry name" value="Thaumatin"/>
</dbReference>
<dbReference type="PANTHER" id="PTHR31048">
    <property type="entry name" value="OS03G0233200 PROTEIN"/>
    <property type="match status" value="1"/>
</dbReference>
<dbReference type="Pfam" id="PF00314">
    <property type="entry name" value="Thaumatin"/>
    <property type="match status" value="1"/>
</dbReference>
<dbReference type="PIRSF" id="PIRSF002703">
    <property type="entry name" value="Thaumatin"/>
    <property type="match status" value="1"/>
</dbReference>
<dbReference type="PRINTS" id="PR00347">
    <property type="entry name" value="THAUMATIN"/>
</dbReference>
<dbReference type="SMART" id="SM00205">
    <property type="entry name" value="THN"/>
    <property type="match status" value="1"/>
</dbReference>
<dbReference type="SUPFAM" id="SSF49870">
    <property type="entry name" value="Osmotin, thaumatin-like protein"/>
    <property type="match status" value="1"/>
</dbReference>
<dbReference type="PROSITE" id="PS51367">
    <property type="entry name" value="THAUMATIN_2"/>
    <property type="match status" value="1"/>
</dbReference>
<gene>
    <name evidence="4" type="primary">TLP1</name>
    <name evidence="7" type="ordered locus">At4g24180</name>
    <name evidence="6" type="ORF">T19F6.2</name>
    <name evidence="8" type="ORF">T22A6.10</name>
</gene>
<name>THLP1_ARATH</name>
<sequence>MIITVLHSHVSFYFIILSFLFFHALHLVGSDGATITIVNRCSFTVWPGILSNSGSGDIGTTGFELVPGGSRSFQAPASWSGRFWARTGCNFNSDTGQGTCLTGDCGSNQVECNGAGAKPPATLAEFTIGSGPADPARKQDFYDVSLVDGYNVPMLVEASGGSEGTCLTTGCVTDLNQKCPTELRFGSGSACKSACEAFGSPEYCCSGAYASPTECKPSMYSEIFKSACPRSYSYAFDDATSTFTCTDADYTITFCPSLPR</sequence>
<feature type="signal peptide" evidence="1">
    <location>
        <begin position="1"/>
        <end position="32"/>
    </location>
</feature>
<feature type="chain" id="PRO_0000441918" description="Thaumatin-like protein 1" evidence="1">
    <location>
        <begin position="33"/>
        <end position="260"/>
    </location>
</feature>
<feature type="disulfide bond" evidence="2">
    <location>
        <begin position="41"/>
        <end position="255"/>
    </location>
</feature>
<feature type="disulfide bond" evidence="2">
    <location>
        <begin position="89"/>
        <end position="100"/>
    </location>
</feature>
<feature type="disulfide bond" evidence="2">
    <location>
        <begin position="105"/>
        <end position="112"/>
    </location>
</feature>
<feature type="disulfide bond" evidence="2">
    <location>
        <begin position="166"/>
        <end position="245"/>
    </location>
</feature>
<feature type="disulfide bond" evidence="2">
    <location>
        <begin position="171"/>
        <end position="228"/>
    </location>
</feature>
<feature type="disulfide bond" evidence="2">
    <location>
        <begin position="179"/>
        <end position="191"/>
    </location>
</feature>
<feature type="disulfide bond" evidence="2">
    <location>
        <begin position="195"/>
        <end position="204"/>
    </location>
</feature>
<feature type="disulfide bond" evidence="2">
    <location>
        <begin position="205"/>
        <end position="215"/>
    </location>
</feature>
<feature type="splice variant" id="VSP_059133" description="In isoform 2.">
    <location>
        <begin position="24"/>
        <end position="28"/>
    </location>
</feature>
<feature type="sequence conflict" description="In Ref. 3; CF652807." evidence="5" ref="3">
    <original>V</original>
    <variation>A</variation>
    <location>
        <position position="5"/>
    </location>
</feature>
<feature type="sequence conflict" description="In Ref. 3; CF652807." evidence="5" ref="3">
    <original>VGS</original>
    <variation>EGR</variation>
    <location>
        <begin position="28"/>
        <end position="30"/>
    </location>
</feature>
<feature type="sequence conflict" description="In Ref. 3; CF652807." evidence="5" ref="3">
    <original>V</original>
    <variation>E</variation>
    <location>
        <position position="38"/>
    </location>
</feature>
<feature type="sequence conflict" description="In Ref. 3; CF652807." evidence="5" ref="3">
    <original>VW</original>
    <variation>GG</variation>
    <location>
        <begin position="45"/>
        <end position="46"/>
    </location>
</feature>
<feature type="sequence conflict" description="In Ref. 3; CF652807." evidence="5" ref="3">
    <original>E</original>
    <variation>K</variation>
    <location>
        <position position="64"/>
    </location>
</feature>
<feature type="sequence conflict" description="In Ref. 3; CF652807." evidence="5" ref="3">
    <original>R</original>
    <variation>Q</variation>
    <location>
        <position position="86"/>
    </location>
</feature>
<feature type="sequence conflict" description="In Ref. 3; CF652807." evidence="5" ref="3">
    <original>D</original>
    <variation>N</variation>
    <location>
        <position position="94"/>
    </location>
</feature>
<feature type="sequence conflict" description="In Ref. 3; CF652807." evidence="5" ref="3">
    <original>E</original>
    <variation>K</variation>
    <location>
        <position position="111"/>
    </location>
</feature>
<feature type="sequence conflict" description="In Ref. 3; CF652807." evidence="5" ref="3">
    <original>E</original>
    <variation>K</variation>
    <location>
        <position position="125"/>
    </location>
</feature>
<feature type="sequence conflict" description="In Ref. 3; CF652807." evidence="5" ref="3">
    <original>D</original>
    <variation>N</variation>
    <location>
        <position position="134"/>
    </location>
</feature>
<feature type="sequence conflict" description="In Ref. 3; CF652807." evidence="5" ref="3">
    <original>DFYDVSLV</original>
    <variation>NFYNVSLG</variation>
    <location>
        <begin position="140"/>
        <end position="147"/>
    </location>
</feature>
<feature type="sequence conflict" description="In Ref. 3; CF652807." evidence="5" ref="3">
    <original>VEASGGSE</original>
    <variation>GEARGGSK</variation>
    <location>
        <begin position="156"/>
        <end position="163"/>
    </location>
</feature>
<evidence type="ECO:0000255" key="1"/>
<evidence type="ECO:0000255" key="2">
    <source>
        <dbReference type="PROSITE-ProRule" id="PRU00699"/>
    </source>
</evidence>
<evidence type="ECO:0000269" key="3">
    <source>
    </source>
</evidence>
<evidence type="ECO:0000303" key="4">
    <source>
    </source>
</evidence>
<evidence type="ECO:0000305" key="5"/>
<evidence type="ECO:0000312" key="6">
    <source>
        <dbReference type="EMBL" id="AAB63607.1"/>
    </source>
</evidence>
<evidence type="ECO:0000312" key="7">
    <source>
        <dbReference type="EMBL" id="ANM66723.1"/>
    </source>
</evidence>
<evidence type="ECO:0000312" key="8">
    <source>
        <dbReference type="EMBL" id="CAB45053.1"/>
    </source>
</evidence>